<comment type="function">
    <text evidence="1">Catalyzes the condensation of (S)-aspartate-beta-semialdehyde [(S)-ASA] and pyruvate to 4-hydroxy-tetrahydrodipicolinate (HTPA).</text>
</comment>
<comment type="catalytic activity">
    <reaction evidence="1">
        <text>L-aspartate 4-semialdehyde + pyruvate = (2S,4S)-4-hydroxy-2,3,4,5-tetrahydrodipicolinate + H2O + H(+)</text>
        <dbReference type="Rhea" id="RHEA:34171"/>
        <dbReference type="ChEBI" id="CHEBI:15361"/>
        <dbReference type="ChEBI" id="CHEBI:15377"/>
        <dbReference type="ChEBI" id="CHEBI:15378"/>
        <dbReference type="ChEBI" id="CHEBI:67139"/>
        <dbReference type="ChEBI" id="CHEBI:537519"/>
        <dbReference type="EC" id="4.3.3.7"/>
    </reaction>
</comment>
<comment type="pathway">
    <text evidence="1">Amino-acid biosynthesis; L-lysine biosynthesis via DAP pathway; (S)-tetrahydrodipicolinate from L-aspartate: step 3/4.</text>
</comment>
<comment type="subunit">
    <text evidence="1">Homotetramer; dimer of dimers.</text>
</comment>
<comment type="subcellular location">
    <subcellularLocation>
        <location evidence="1">Cytoplasm</location>
    </subcellularLocation>
</comment>
<comment type="similarity">
    <text evidence="1">Belongs to the DapA family.</text>
</comment>
<comment type="caution">
    <text evidence="2">Was originally thought to be a dihydrodipicolinate synthase (DHDPS), catalyzing the condensation of (S)-aspartate-beta-semialdehyde [(S)-ASA] and pyruvate to dihydrodipicolinate (DHDP). However, it was shown in E.coli that the product of the enzymatic reaction is not dihydrodipicolinate but in fact (4S)-4-hydroxy-2,3,4,5-tetrahydro-(2S)-dipicolinic acid (HTPA), and that the consecutive dehydration reaction leading to DHDP is not spontaneous but catalyzed by DapB.</text>
</comment>
<proteinExistence type="inferred from homology"/>
<name>DAPA_CHLMU</name>
<evidence type="ECO:0000255" key="1">
    <source>
        <dbReference type="HAMAP-Rule" id="MF_00418"/>
    </source>
</evidence>
<evidence type="ECO:0000305" key="2"/>
<accession>Q9PK33</accession>
<protein>
    <recommendedName>
        <fullName evidence="1">4-hydroxy-tetrahydrodipicolinate synthase</fullName>
        <shortName evidence="1">HTPA synthase</shortName>
        <ecNumber evidence="1">4.3.3.7</ecNumber>
    </recommendedName>
</protein>
<feature type="chain" id="PRO_0000103099" description="4-hydroxy-tetrahydrodipicolinate synthase">
    <location>
        <begin position="1"/>
        <end position="286"/>
    </location>
</feature>
<feature type="active site" description="Proton donor/acceptor" evidence="1">
    <location>
        <position position="129"/>
    </location>
</feature>
<feature type="active site" description="Schiff-base intermediate with substrate" evidence="1">
    <location>
        <position position="157"/>
    </location>
</feature>
<feature type="binding site" evidence="1">
    <location>
        <position position="42"/>
    </location>
    <ligand>
        <name>pyruvate</name>
        <dbReference type="ChEBI" id="CHEBI:15361"/>
    </ligand>
</feature>
<feature type="binding site" evidence="1">
    <location>
        <position position="196"/>
    </location>
    <ligand>
        <name>pyruvate</name>
        <dbReference type="ChEBI" id="CHEBI:15361"/>
    </ligand>
</feature>
<feature type="site" description="Part of a proton relay during catalysis" evidence="1">
    <location>
        <position position="41"/>
    </location>
</feature>
<feature type="site" description="Part of a proton relay during catalysis" evidence="1">
    <location>
        <position position="103"/>
    </location>
</feature>
<gene>
    <name evidence="1" type="primary">dapA</name>
    <name type="ordered locus">TC_0640</name>
</gene>
<keyword id="KW-0028">Amino-acid biosynthesis</keyword>
<keyword id="KW-0963">Cytoplasm</keyword>
<keyword id="KW-0220">Diaminopimelate biosynthesis</keyword>
<keyword id="KW-0456">Lyase</keyword>
<keyword id="KW-0457">Lysine biosynthesis</keyword>
<keyword id="KW-0704">Schiff base</keyword>
<reference key="1">
    <citation type="journal article" date="2000" name="Nucleic Acids Res.">
        <title>Genome sequences of Chlamydia trachomatis MoPn and Chlamydia pneumoniae AR39.</title>
        <authorList>
            <person name="Read T.D."/>
            <person name="Brunham R.C."/>
            <person name="Shen C."/>
            <person name="Gill S.R."/>
            <person name="Heidelberg J.F."/>
            <person name="White O."/>
            <person name="Hickey E.K."/>
            <person name="Peterson J.D."/>
            <person name="Utterback T.R."/>
            <person name="Berry K.J."/>
            <person name="Bass S."/>
            <person name="Linher K.D."/>
            <person name="Weidman J.F."/>
            <person name="Khouri H.M."/>
            <person name="Craven B."/>
            <person name="Bowman C."/>
            <person name="Dodson R.J."/>
            <person name="Gwinn M.L."/>
            <person name="Nelson W.C."/>
            <person name="DeBoy R.T."/>
            <person name="Kolonay J.F."/>
            <person name="McClarty G."/>
            <person name="Salzberg S.L."/>
            <person name="Eisen J.A."/>
            <person name="Fraser C.M."/>
        </authorList>
    </citation>
    <scope>NUCLEOTIDE SEQUENCE [LARGE SCALE GENOMIC DNA]</scope>
    <source>
        <strain>MoPn / Nigg</strain>
    </source>
</reference>
<organism>
    <name type="scientific">Chlamydia muridarum (strain MoPn / Nigg)</name>
    <dbReference type="NCBI Taxonomy" id="243161"/>
    <lineage>
        <taxon>Bacteria</taxon>
        <taxon>Pseudomonadati</taxon>
        <taxon>Chlamydiota</taxon>
        <taxon>Chlamydiia</taxon>
        <taxon>Chlamydiales</taxon>
        <taxon>Chlamydiaceae</taxon>
        <taxon>Chlamydia/Chlamydophila group</taxon>
        <taxon>Chlamydia</taxon>
    </lineage>
</organism>
<dbReference type="EC" id="4.3.3.7" evidence="1"/>
<dbReference type="EMBL" id="AE002160">
    <property type="protein sequence ID" value="AAF39469.1"/>
    <property type="molecule type" value="Genomic_DNA"/>
</dbReference>
<dbReference type="PIR" id="C81681">
    <property type="entry name" value="C81681"/>
</dbReference>
<dbReference type="RefSeq" id="WP_010231083.1">
    <property type="nucleotide sequence ID" value="NZ_CP063055.1"/>
</dbReference>
<dbReference type="SMR" id="Q9PK33"/>
<dbReference type="GeneID" id="1246001"/>
<dbReference type="KEGG" id="cmu:TC_0640"/>
<dbReference type="eggNOG" id="COG0329">
    <property type="taxonomic scope" value="Bacteria"/>
</dbReference>
<dbReference type="HOGENOM" id="CLU_049343_7_0_0"/>
<dbReference type="OrthoDB" id="9782828at2"/>
<dbReference type="UniPathway" id="UPA00034">
    <property type="reaction ID" value="UER00017"/>
</dbReference>
<dbReference type="Proteomes" id="UP000000800">
    <property type="component" value="Chromosome"/>
</dbReference>
<dbReference type="GO" id="GO:0005829">
    <property type="term" value="C:cytosol"/>
    <property type="evidence" value="ECO:0007669"/>
    <property type="project" value="TreeGrafter"/>
</dbReference>
<dbReference type="GO" id="GO:0008840">
    <property type="term" value="F:4-hydroxy-tetrahydrodipicolinate synthase activity"/>
    <property type="evidence" value="ECO:0007669"/>
    <property type="project" value="UniProtKB-UniRule"/>
</dbReference>
<dbReference type="GO" id="GO:0019877">
    <property type="term" value="P:diaminopimelate biosynthetic process"/>
    <property type="evidence" value="ECO:0007669"/>
    <property type="project" value="UniProtKB-UniRule"/>
</dbReference>
<dbReference type="GO" id="GO:0009089">
    <property type="term" value="P:lysine biosynthetic process via diaminopimelate"/>
    <property type="evidence" value="ECO:0007669"/>
    <property type="project" value="UniProtKB-UniRule"/>
</dbReference>
<dbReference type="CDD" id="cd00408">
    <property type="entry name" value="DHDPS-like"/>
    <property type="match status" value="1"/>
</dbReference>
<dbReference type="Gene3D" id="3.20.20.70">
    <property type="entry name" value="Aldolase class I"/>
    <property type="match status" value="1"/>
</dbReference>
<dbReference type="HAMAP" id="MF_00418">
    <property type="entry name" value="DapA"/>
    <property type="match status" value="1"/>
</dbReference>
<dbReference type="InterPro" id="IPR013785">
    <property type="entry name" value="Aldolase_TIM"/>
</dbReference>
<dbReference type="InterPro" id="IPR005263">
    <property type="entry name" value="DapA"/>
</dbReference>
<dbReference type="InterPro" id="IPR002220">
    <property type="entry name" value="DapA-like"/>
</dbReference>
<dbReference type="InterPro" id="IPR020625">
    <property type="entry name" value="Schiff_base-form_aldolases_AS"/>
</dbReference>
<dbReference type="InterPro" id="IPR020624">
    <property type="entry name" value="Schiff_base-form_aldolases_CS"/>
</dbReference>
<dbReference type="NCBIfam" id="TIGR00674">
    <property type="entry name" value="dapA"/>
    <property type="match status" value="1"/>
</dbReference>
<dbReference type="PANTHER" id="PTHR12128:SF66">
    <property type="entry name" value="4-HYDROXY-2-OXOGLUTARATE ALDOLASE, MITOCHONDRIAL"/>
    <property type="match status" value="1"/>
</dbReference>
<dbReference type="PANTHER" id="PTHR12128">
    <property type="entry name" value="DIHYDRODIPICOLINATE SYNTHASE"/>
    <property type="match status" value="1"/>
</dbReference>
<dbReference type="Pfam" id="PF00701">
    <property type="entry name" value="DHDPS"/>
    <property type="match status" value="1"/>
</dbReference>
<dbReference type="PIRSF" id="PIRSF001365">
    <property type="entry name" value="DHDPS"/>
    <property type="match status" value="1"/>
</dbReference>
<dbReference type="PRINTS" id="PR00146">
    <property type="entry name" value="DHPICSNTHASE"/>
</dbReference>
<dbReference type="SMART" id="SM01130">
    <property type="entry name" value="DHDPS"/>
    <property type="match status" value="1"/>
</dbReference>
<dbReference type="SUPFAM" id="SSF51569">
    <property type="entry name" value="Aldolase"/>
    <property type="match status" value="1"/>
</dbReference>
<dbReference type="PROSITE" id="PS00665">
    <property type="entry name" value="DHDPS_1"/>
    <property type="match status" value="1"/>
</dbReference>
<dbReference type="PROSITE" id="PS00666">
    <property type="entry name" value="DHDPS_2"/>
    <property type="match status" value="1"/>
</dbReference>
<sequence length="286" mass="31285">MSVVTACITPFKADLSIDFAALESVVRSQEHAGNGVFLFGSTGESLSLAYEEKFAALSFVSTLKLNVPLFLGVTATSIQEAISWIEFAQRWPIDGFFVPTPLYTKPGLYGQKVWFEKILSVSKKPIILYNNPSRTGVALHPEVVKSLASHPLCMGVKDSGGSTQACTLFAESGVRVFCGDDGMWPEMRLSGASGLVSVLSNVWPELARDYVAQCRSIDAWKKTCSWLELSVNPLGIKALMAAQKMIECELVRPPLSIRDFQERDQLADILACRAILQAELLSVCVQ</sequence>